<reference key="1">
    <citation type="journal article" date="2003" name="Nature">
        <title>Genome sequence of Bacillus cereus and comparative analysis with Bacillus anthracis.</title>
        <authorList>
            <person name="Ivanova N."/>
            <person name="Sorokin A."/>
            <person name="Anderson I."/>
            <person name="Galleron N."/>
            <person name="Candelon B."/>
            <person name="Kapatral V."/>
            <person name="Bhattacharyya A."/>
            <person name="Reznik G."/>
            <person name="Mikhailova N."/>
            <person name="Lapidus A."/>
            <person name="Chu L."/>
            <person name="Mazur M."/>
            <person name="Goltsman E."/>
            <person name="Larsen N."/>
            <person name="D'Souza M."/>
            <person name="Walunas T."/>
            <person name="Grechkin Y."/>
            <person name="Pusch G."/>
            <person name="Haselkorn R."/>
            <person name="Fonstein M."/>
            <person name="Ehrlich S.D."/>
            <person name="Overbeek R."/>
            <person name="Kyrpides N.C."/>
        </authorList>
    </citation>
    <scope>NUCLEOTIDE SEQUENCE [LARGE SCALE GENOMIC DNA]</scope>
    <source>
        <strain>ATCC 14579 / DSM 31 / CCUG 7414 / JCM 2152 / NBRC 15305 / NCIMB 9373 / NCTC 2599 / NRRL B-3711</strain>
    </source>
</reference>
<keyword id="KW-0028">Amino-acid biosynthesis</keyword>
<keyword id="KW-0100">Branched-chain amino acid biosynthesis</keyword>
<keyword id="KW-0460">Magnesium</keyword>
<keyword id="KW-0479">Metal-binding</keyword>
<keyword id="KW-0521">NADP</keyword>
<keyword id="KW-0560">Oxidoreductase</keyword>
<keyword id="KW-1185">Reference proteome</keyword>
<comment type="function">
    <text evidence="1">Involved in the biosynthesis of branched-chain amino acids (BCAA). Catalyzes an alkyl-migration followed by a ketol-acid reduction of (S)-2-acetolactate (S2AL) to yield (R)-2,3-dihydroxy-isovalerate. In the isomerase reaction, S2AL is rearranged via a Mg-dependent methyl migration to produce 3-hydroxy-3-methyl-2-ketobutyrate (HMKB). In the reductase reaction, this 2-ketoacid undergoes a metal-dependent reduction by NADPH to yield (R)-2,3-dihydroxy-isovalerate.</text>
</comment>
<comment type="catalytic activity">
    <reaction evidence="1">
        <text>(2R)-2,3-dihydroxy-3-methylbutanoate + NADP(+) = (2S)-2-acetolactate + NADPH + H(+)</text>
        <dbReference type="Rhea" id="RHEA:22068"/>
        <dbReference type="ChEBI" id="CHEBI:15378"/>
        <dbReference type="ChEBI" id="CHEBI:49072"/>
        <dbReference type="ChEBI" id="CHEBI:57783"/>
        <dbReference type="ChEBI" id="CHEBI:58349"/>
        <dbReference type="ChEBI" id="CHEBI:58476"/>
        <dbReference type="EC" id="1.1.1.86"/>
    </reaction>
</comment>
<comment type="catalytic activity">
    <reaction evidence="1">
        <text>(2R,3R)-2,3-dihydroxy-3-methylpentanoate + NADP(+) = (S)-2-ethyl-2-hydroxy-3-oxobutanoate + NADPH + H(+)</text>
        <dbReference type="Rhea" id="RHEA:13493"/>
        <dbReference type="ChEBI" id="CHEBI:15378"/>
        <dbReference type="ChEBI" id="CHEBI:49256"/>
        <dbReference type="ChEBI" id="CHEBI:49258"/>
        <dbReference type="ChEBI" id="CHEBI:57783"/>
        <dbReference type="ChEBI" id="CHEBI:58349"/>
        <dbReference type="EC" id="1.1.1.86"/>
    </reaction>
</comment>
<comment type="cofactor">
    <cofactor evidence="1">
        <name>Mg(2+)</name>
        <dbReference type="ChEBI" id="CHEBI:18420"/>
    </cofactor>
    <text evidence="1">Binds 2 magnesium ions per subunit.</text>
</comment>
<comment type="pathway">
    <text evidence="1">Amino-acid biosynthesis; L-isoleucine biosynthesis; L-isoleucine from 2-oxobutanoate: step 2/4.</text>
</comment>
<comment type="pathway">
    <text evidence="1">Amino-acid biosynthesis; L-valine biosynthesis; L-valine from pyruvate: step 2/4.</text>
</comment>
<comment type="similarity">
    <text evidence="1">Belongs to the ketol-acid reductoisomerase family.</text>
</comment>
<comment type="sequence caution" evidence="4">
    <conflict type="erroneous initiation">
        <sequence resource="EMBL-CDS" id="AAP08380"/>
    </conflict>
</comment>
<gene>
    <name evidence="1" type="primary">ilvC1</name>
    <name type="ordered locus">BC_1399</name>
</gene>
<evidence type="ECO:0000255" key="1">
    <source>
        <dbReference type="HAMAP-Rule" id="MF_00435"/>
    </source>
</evidence>
<evidence type="ECO:0000255" key="2">
    <source>
        <dbReference type="PROSITE-ProRule" id="PRU01197"/>
    </source>
</evidence>
<evidence type="ECO:0000255" key="3">
    <source>
        <dbReference type="PROSITE-ProRule" id="PRU01198"/>
    </source>
</evidence>
<evidence type="ECO:0000305" key="4"/>
<accession>Q81G13</accession>
<sequence length="336" mass="36649">MAKVYYEKDVTVNVLKEKKVAIIGYGSQGHAHAQNLRDNGFDVVVGLRKGKSWDKANEDGFSVYTVAEAAEKADVVMILLPDELQPEVYEAEIAPNLQAGNSLVFAHGFNVHFDQVKPPANVDVFLVAPKGPGHLVRRTFAEGGAVPALFAVYQDATGVATEKALSYADGIGATRAGVLETTFKEETETDLFGEQAVLCGGVTALVKAGFETLVDAGYQPELAYFECLHELKLIVDLMYEGGLENMRYSVSDTAQWGDFVSGPRVVTEDTKKAMGAVLAEIQDGTFARGWIAEHKAGRPNFHATNEKENKHEIEVVGRKLREMMPFVQPRVKVGVK</sequence>
<proteinExistence type="inferred from homology"/>
<organism>
    <name type="scientific">Bacillus cereus (strain ATCC 14579 / DSM 31 / CCUG 7414 / JCM 2152 / NBRC 15305 / NCIMB 9373 / NCTC 2599 / NRRL B-3711)</name>
    <dbReference type="NCBI Taxonomy" id="226900"/>
    <lineage>
        <taxon>Bacteria</taxon>
        <taxon>Bacillati</taxon>
        <taxon>Bacillota</taxon>
        <taxon>Bacilli</taxon>
        <taxon>Bacillales</taxon>
        <taxon>Bacillaceae</taxon>
        <taxon>Bacillus</taxon>
        <taxon>Bacillus cereus group</taxon>
    </lineage>
</organism>
<name>ILVC1_BACCR</name>
<dbReference type="EC" id="1.1.1.86" evidence="1"/>
<dbReference type="EMBL" id="AE016877">
    <property type="protein sequence ID" value="AAP08380.1"/>
    <property type="status" value="ALT_INIT"/>
    <property type="molecule type" value="Genomic_DNA"/>
</dbReference>
<dbReference type="RefSeq" id="NP_831179.1">
    <property type="nucleotide sequence ID" value="NC_004722.1"/>
</dbReference>
<dbReference type="SMR" id="Q81G13"/>
<dbReference type="STRING" id="226900.BC_1399"/>
<dbReference type="KEGG" id="bce:BC1399"/>
<dbReference type="PATRIC" id="fig|226900.8.peg.1376"/>
<dbReference type="HOGENOM" id="CLU_033821_0_1_9"/>
<dbReference type="OrthoDB" id="9804088at2"/>
<dbReference type="UniPathway" id="UPA00047">
    <property type="reaction ID" value="UER00056"/>
</dbReference>
<dbReference type="UniPathway" id="UPA00049">
    <property type="reaction ID" value="UER00060"/>
</dbReference>
<dbReference type="Proteomes" id="UP000001417">
    <property type="component" value="Chromosome"/>
</dbReference>
<dbReference type="GO" id="GO:0005829">
    <property type="term" value="C:cytosol"/>
    <property type="evidence" value="ECO:0000318"/>
    <property type="project" value="GO_Central"/>
</dbReference>
<dbReference type="GO" id="GO:0004455">
    <property type="term" value="F:ketol-acid reductoisomerase activity"/>
    <property type="evidence" value="ECO:0000318"/>
    <property type="project" value="GO_Central"/>
</dbReference>
<dbReference type="GO" id="GO:0000287">
    <property type="term" value="F:magnesium ion binding"/>
    <property type="evidence" value="ECO:0007669"/>
    <property type="project" value="UniProtKB-UniRule"/>
</dbReference>
<dbReference type="GO" id="GO:0050661">
    <property type="term" value="F:NADP binding"/>
    <property type="evidence" value="ECO:0007669"/>
    <property type="project" value="InterPro"/>
</dbReference>
<dbReference type="GO" id="GO:0009097">
    <property type="term" value="P:isoleucine biosynthetic process"/>
    <property type="evidence" value="ECO:0000318"/>
    <property type="project" value="GO_Central"/>
</dbReference>
<dbReference type="GO" id="GO:0009099">
    <property type="term" value="P:L-valine biosynthetic process"/>
    <property type="evidence" value="ECO:0000318"/>
    <property type="project" value="GO_Central"/>
</dbReference>
<dbReference type="FunFam" id="3.40.50.720:FF:000023">
    <property type="entry name" value="Ketol-acid reductoisomerase (NADP(+))"/>
    <property type="match status" value="1"/>
</dbReference>
<dbReference type="Gene3D" id="6.10.240.10">
    <property type="match status" value="1"/>
</dbReference>
<dbReference type="Gene3D" id="3.40.50.720">
    <property type="entry name" value="NAD(P)-binding Rossmann-like Domain"/>
    <property type="match status" value="1"/>
</dbReference>
<dbReference type="HAMAP" id="MF_00435">
    <property type="entry name" value="IlvC"/>
    <property type="match status" value="1"/>
</dbReference>
<dbReference type="InterPro" id="IPR008927">
    <property type="entry name" value="6-PGluconate_DH-like_C_sf"/>
</dbReference>
<dbReference type="InterPro" id="IPR013023">
    <property type="entry name" value="KARI"/>
</dbReference>
<dbReference type="InterPro" id="IPR000506">
    <property type="entry name" value="KARI_C"/>
</dbReference>
<dbReference type="InterPro" id="IPR013116">
    <property type="entry name" value="KARI_N"/>
</dbReference>
<dbReference type="InterPro" id="IPR014359">
    <property type="entry name" value="KARI_prok"/>
</dbReference>
<dbReference type="InterPro" id="IPR036291">
    <property type="entry name" value="NAD(P)-bd_dom_sf"/>
</dbReference>
<dbReference type="NCBIfam" id="TIGR00465">
    <property type="entry name" value="ilvC"/>
    <property type="match status" value="1"/>
</dbReference>
<dbReference type="NCBIfam" id="NF004017">
    <property type="entry name" value="PRK05479.1"/>
    <property type="match status" value="1"/>
</dbReference>
<dbReference type="NCBIfam" id="NF009940">
    <property type="entry name" value="PRK13403.1"/>
    <property type="match status" value="1"/>
</dbReference>
<dbReference type="PANTHER" id="PTHR21371">
    <property type="entry name" value="KETOL-ACID REDUCTOISOMERASE, MITOCHONDRIAL"/>
    <property type="match status" value="1"/>
</dbReference>
<dbReference type="PANTHER" id="PTHR21371:SF1">
    <property type="entry name" value="KETOL-ACID REDUCTOISOMERASE, MITOCHONDRIAL"/>
    <property type="match status" value="1"/>
</dbReference>
<dbReference type="Pfam" id="PF01450">
    <property type="entry name" value="KARI_C"/>
    <property type="match status" value="1"/>
</dbReference>
<dbReference type="Pfam" id="PF07991">
    <property type="entry name" value="KARI_N"/>
    <property type="match status" value="1"/>
</dbReference>
<dbReference type="PIRSF" id="PIRSF000116">
    <property type="entry name" value="IlvC_gammaproteo"/>
    <property type="match status" value="1"/>
</dbReference>
<dbReference type="SUPFAM" id="SSF48179">
    <property type="entry name" value="6-phosphogluconate dehydrogenase C-terminal domain-like"/>
    <property type="match status" value="1"/>
</dbReference>
<dbReference type="SUPFAM" id="SSF51735">
    <property type="entry name" value="NAD(P)-binding Rossmann-fold domains"/>
    <property type="match status" value="1"/>
</dbReference>
<dbReference type="PROSITE" id="PS51851">
    <property type="entry name" value="KARI_C"/>
    <property type="match status" value="1"/>
</dbReference>
<dbReference type="PROSITE" id="PS51850">
    <property type="entry name" value="KARI_N"/>
    <property type="match status" value="1"/>
</dbReference>
<feature type="chain" id="PRO_0000151274" description="Ketol-acid reductoisomerase (NADP(+)) 1">
    <location>
        <begin position="1"/>
        <end position="336"/>
    </location>
</feature>
<feature type="domain" description="KARI N-terminal Rossmann" evidence="2">
    <location>
        <begin position="2"/>
        <end position="181"/>
    </location>
</feature>
<feature type="domain" description="KARI C-terminal knotted" evidence="3">
    <location>
        <begin position="182"/>
        <end position="327"/>
    </location>
</feature>
<feature type="active site" evidence="1">
    <location>
        <position position="107"/>
    </location>
</feature>
<feature type="binding site" evidence="1">
    <location>
        <begin position="25"/>
        <end position="28"/>
    </location>
    <ligand>
        <name>NADP(+)</name>
        <dbReference type="ChEBI" id="CHEBI:58349"/>
    </ligand>
</feature>
<feature type="binding site" evidence="1">
    <location>
        <position position="48"/>
    </location>
    <ligand>
        <name>NADP(+)</name>
        <dbReference type="ChEBI" id="CHEBI:58349"/>
    </ligand>
</feature>
<feature type="binding site" evidence="1">
    <location>
        <position position="52"/>
    </location>
    <ligand>
        <name>NADP(+)</name>
        <dbReference type="ChEBI" id="CHEBI:58349"/>
    </ligand>
</feature>
<feature type="binding site" evidence="1">
    <location>
        <begin position="82"/>
        <end position="85"/>
    </location>
    <ligand>
        <name>NADP(+)</name>
        <dbReference type="ChEBI" id="CHEBI:58349"/>
    </ligand>
</feature>
<feature type="binding site" evidence="1">
    <location>
        <position position="133"/>
    </location>
    <ligand>
        <name>NADP(+)</name>
        <dbReference type="ChEBI" id="CHEBI:58349"/>
    </ligand>
</feature>
<feature type="binding site" evidence="1">
    <location>
        <position position="190"/>
    </location>
    <ligand>
        <name>Mg(2+)</name>
        <dbReference type="ChEBI" id="CHEBI:18420"/>
        <label>1</label>
    </ligand>
</feature>
<feature type="binding site" evidence="1">
    <location>
        <position position="190"/>
    </location>
    <ligand>
        <name>Mg(2+)</name>
        <dbReference type="ChEBI" id="CHEBI:18420"/>
        <label>2</label>
    </ligand>
</feature>
<feature type="binding site" evidence="1">
    <location>
        <position position="194"/>
    </location>
    <ligand>
        <name>Mg(2+)</name>
        <dbReference type="ChEBI" id="CHEBI:18420"/>
        <label>1</label>
    </ligand>
</feature>
<feature type="binding site" evidence="1">
    <location>
        <position position="226"/>
    </location>
    <ligand>
        <name>Mg(2+)</name>
        <dbReference type="ChEBI" id="CHEBI:18420"/>
        <label>2</label>
    </ligand>
</feature>
<feature type="binding site" evidence="1">
    <location>
        <position position="230"/>
    </location>
    <ligand>
        <name>Mg(2+)</name>
        <dbReference type="ChEBI" id="CHEBI:18420"/>
        <label>2</label>
    </ligand>
</feature>
<feature type="binding site" evidence="1">
    <location>
        <position position="251"/>
    </location>
    <ligand>
        <name>substrate</name>
    </ligand>
</feature>
<protein>
    <recommendedName>
        <fullName evidence="1">Ketol-acid reductoisomerase (NADP(+)) 1</fullName>
        <shortName evidence="1">KARI 1</shortName>
        <ecNumber evidence="1">1.1.1.86</ecNumber>
    </recommendedName>
    <alternativeName>
        <fullName evidence="1">Acetohydroxy-acid isomeroreductase 1</fullName>
        <shortName evidence="1">AHIR 1</shortName>
    </alternativeName>
    <alternativeName>
        <fullName evidence="1">Alpha-keto-beta-hydroxylacyl reductoisomerase 1</fullName>
    </alternativeName>
    <alternativeName>
        <fullName evidence="1">Ketol-acid reductoisomerase type 1</fullName>
    </alternativeName>
    <alternativeName>
        <fullName evidence="1">Ketol-acid reductoisomerase type I</fullName>
    </alternativeName>
</protein>